<sequence length="406" mass="44771">MTYPNLLDRFLTYVKVNTRSDEHSTTTPSTQSQVDFATNVLIPEMKRVGLQNVYYLPNGFAIGTLPANDPSLTRKIGFISHMDTADFNAEGVNPQVIENYDGCVIELGNSGFKLDPADFKSLEKYPGQTLITTDGTTLLGADDKSGIAEIMTAIEYLTAHPEIKHCEIRVGFGPDEEIGVGANKFDAEDFDVDFAYTVDGGPLGELQYETFSAAGAELHFQGRNVHPGTAKGQMVNALQLAIDFHNQLPENDRPELTEGYQGFYHLMDVTGSVEEARASYIIRDFEKDAFEARKASMQSIADKMNEELGSNRVTLNLTDQYYNMKEVIEKDMTPITIAKAVMEDLGITPIIEPIRGGTDGSKISFMGIPTPNIFAGGENMHGRFEYVSLQTMERAVDTIIGIVRSL</sequence>
<protein>
    <recommendedName>
        <fullName evidence="1">Peptidase T</fullName>
        <ecNumber evidence="1">3.4.11.4</ecNumber>
    </recommendedName>
    <alternativeName>
        <fullName evidence="1">Aminotripeptidase</fullName>
        <shortName evidence="1">Tripeptidase</shortName>
    </alternativeName>
    <alternativeName>
        <fullName evidence="1">Tripeptide aminopeptidase</fullName>
    </alternativeName>
</protein>
<proteinExistence type="inferred from homology"/>
<organism>
    <name type="scientific">Streptococcus pneumoniae (strain ATCC BAA-255 / R6)</name>
    <dbReference type="NCBI Taxonomy" id="171101"/>
    <lineage>
        <taxon>Bacteria</taxon>
        <taxon>Bacillati</taxon>
        <taxon>Bacillota</taxon>
        <taxon>Bacilli</taxon>
        <taxon>Lactobacillales</taxon>
        <taxon>Streptococcaceae</taxon>
        <taxon>Streptococcus</taxon>
    </lineage>
</organism>
<comment type="function">
    <text evidence="1">Cleaves the N-terminal amino acid of tripeptides.</text>
</comment>
<comment type="catalytic activity">
    <reaction evidence="1">
        <text>Release of the N-terminal residue from a tripeptide.</text>
        <dbReference type="EC" id="3.4.11.4"/>
    </reaction>
</comment>
<comment type="cofactor">
    <cofactor evidence="1">
        <name>Zn(2+)</name>
        <dbReference type="ChEBI" id="CHEBI:29105"/>
    </cofactor>
    <text evidence="1">Binds 2 Zn(2+) ions per subunit.</text>
</comment>
<comment type="subcellular location">
    <subcellularLocation>
        <location evidence="1">Cytoplasm</location>
    </subcellularLocation>
</comment>
<comment type="similarity">
    <text evidence="1">Belongs to the peptidase M20B family.</text>
</comment>
<reference key="1">
    <citation type="journal article" date="2001" name="J. Bacteriol.">
        <title>Genome of the bacterium Streptococcus pneumoniae strain R6.</title>
        <authorList>
            <person name="Hoskins J."/>
            <person name="Alborn W.E. Jr."/>
            <person name="Arnold J."/>
            <person name="Blaszczak L.C."/>
            <person name="Burgett S."/>
            <person name="DeHoff B.S."/>
            <person name="Estrem S.T."/>
            <person name="Fritz L."/>
            <person name="Fu D.-J."/>
            <person name="Fuller W."/>
            <person name="Geringer C."/>
            <person name="Gilmour R."/>
            <person name="Glass J.S."/>
            <person name="Khoja H."/>
            <person name="Kraft A.R."/>
            <person name="Lagace R.E."/>
            <person name="LeBlanc D.J."/>
            <person name="Lee L.N."/>
            <person name="Lefkowitz E.J."/>
            <person name="Lu J."/>
            <person name="Matsushima P."/>
            <person name="McAhren S.M."/>
            <person name="McHenney M."/>
            <person name="McLeaster K."/>
            <person name="Mundy C.W."/>
            <person name="Nicas T.I."/>
            <person name="Norris F.H."/>
            <person name="O'Gara M."/>
            <person name="Peery R.B."/>
            <person name="Robertson G.T."/>
            <person name="Rockey P."/>
            <person name="Sun P.-M."/>
            <person name="Winkler M.E."/>
            <person name="Yang Y."/>
            <person name="Young-Bellido M."/>
            <person name="Zhao G."/>
            <person name="Zook C.A."/>
            <person name="Baltz R.H."/>
            <person name="Jaskunas S.R."/>
            <person name="Rosteck P.R. Jr."/>
            <person name="Skatrud P.L."/>
            <person name="Glass J.I."/>
        </authorList>
    </citation>
    <scope>NUCLEOTIDE SEQUENCE [LARGE SCALE GENOMIC DNA]</scope>
    <source>
        <strain>ATCC BAA-255 / R6</strain>
    </source>
</reference>
<accession>Q8DQ05</accession>
<dbReference type="EC" id="3.4.11.4" evidence="1"/>
<dbReference type="EMBL" id="AE007317">
    <property type="protein sequence ID" value="AAK99717.1"/>
    <property type="molecule type" value="Genomic_DNA"/>
</dbReference>
<dbReference type="PIR" id="A97986">
    <property type="entry name" value="A97986"/>
</dbReference>
<dbReference type="RefSeq" id="NP_358507.1">
    <property type="nucleotide sequence ID" value="NC_003098.1"/>
</dbReference>
<dbReference type="RefSeq" id="WP_000222027.1">
    <property type="nucleotide sequence ID" value="NC_003098.1"/>
</dbReference>
<dbReference type="SMR" id="Q8DQ05"/>
<dbReference type="STRING" id="171101.spr0913"/>
<dbReference type="MEROPS" id="M20.003"/>
<dbReference type="KEGG" id="spr:spr0913"/>
<dbReference type="PATRIC" id="fig|171101.6.peg.1000"/>
<dbReference type="eggNOG" id="COG2195">
    <property type="taxonomic scope" value="Bacteria"/>
</dbReference>
<dbReference type="HOGENOM" id="CLU_053676_0_0_9"/>
<dbReference type="Proteomes" id="UP000000586">
    <property type="component" value="Chromosome"/>
</dbReference>
<dbReference type="GO" id="GO:0005829">
    <property type="term" value="C:cytosol"/>
    <property type="evidence" value="ECO:0000318"/>
    <property type="project" value="GO_Central"/>
</dbReference>
<dbReference type="GO" id="GO:0008237">
    <property type="term" value="F:metallopeptidase activity"/>
    <property type="evidence" value="ECO:0007669"/>
    <property type="project" value="UniProtKB-KW"/>
</dbReference>
<dbReference type="GO" id="GO:0045148">
    <property type="term" value="F:tripeptide aminopeptidase activity"/>
    <property type="evidence" value="ECO:0000318"/>
    <property type="project" value="GO_Central"/>
</dbReference>
<dbReference type="GO" id="GO:0008270">
    <property type="term" value="F:zinc ion binding"/>
    <property type="evidence" value="ECO:0007669"/>
    <property type="project" value="UniProtKB-UniRule"/>
</dbReference>
<dbReference type="GO" id="GO:0043171">
    <property type="term" value="P:peptide catabolic process"/>
    <property type="evidence" value="ECO:0007669"/>
    <property type="project" value="UniProtKB-UniRule"/>
</dbReference>
<dbReference type="GO" id="GO:0006508">
    <property type="term" value="P:proteolysis"/>
    <property type="evidence" value="ECO:0007669"/>
    <property type="project" value="UniProtKB-UniRule"/>
</dbReference>
<dbReference type="CDD" id="cd03892">
    <property type="entry name" value="M20_peptT"/>
    <property type="match status" value="1"/>
</dbReference>
<dbReference type="FunFam" id="3.30.70.360:FF:000002">
    <property type="entry name" value="Peptidase T"/>
    <property type="match status" value="1"/>
</dbReference>
<dbReference type="Gene3D" id="3.30.70.360">
    <property type="match status" value="1"/>
</dbReference>
<dbReference type="Gene3D" id="3.40.630.10">
    <property type="entry name" value="Zn peptidases"/>
    <property type="match status" value="1"/>
</dbReference>
<dbReference type="HAMAP" id="MF_00550">
    <property type="entry name" value="Aminopeptidase_M20"/>
    <property type="match status" value="1"/>
</dbReference>
<dbReference type="InterPro" id="IPR001261">
    <property type="entry name" value="ArgE/DapE_CS"/>
</dbReference>
<dbReference type="InterPro" id="IPR036264">
    <property type="entry name" value="Bact_exopeptidase_dim_dom"/>
</dbReference>
<dbReference type="InterPro" id="IPR002933">
    <property type="entry name" value="Peptidase_M20"/>
</dbReference>
<dbReference type="InterPro" id="IPR011650">
    <property type="entry name" value="Peptidase_M20_dimer"/>
</dbReference>
<dbReference type="InterPro" id="IPR010161">
    <property type="entry name" value="Peptidase_M20B"/>
</dbReference>
<dbReference type="NCBIfam" id="TIGR01882">
    <property type="entry name" value="peptidase-T"/>
    <property type="match status" value="1"/>
</dbReference>
<dbReference type="NCBIfam" id="NF003976">
    <property type="entry name" value="PRK05469.1"/>
    <property type="match status" value="1"/>
</dbReference>
<dbReference type="NCBIfam" id="NF009920">
    <property type="entry name" value="PRK13381.1"/>
    <property type="match status" value="1"/>
</dbReference>
<dbReference type="PANTHER" id="PTHR42994">
    <property type="entry name" value="PEPTIDASE T"/>
    <property type="match status" value="1"/>
</dbReference>
<dbReference type="PANTHER" id="PTHR42994:SF1">
    <property type="entry name" value="PEPTIDASE T"/>
    <property type="match status" value="1"/>
</dbReference>
<dbReference type="Pfam" id="PF07687">
    <property type="entry name" value="M20_dimer"/>
    <property type="match status" value="1"/>
</dbReference>
<dbReference type="Pfam" id="PF01546">
    <property type="entry name" value="Peptidase_M20"/>
    <property type="match status" value="1"/>
</dbReference>
<dbReference type="PIRSF" id="PIRSF037215">
    <property type="entry name" value="Peptidase_M20B"/>
    <property type="match status" value="1"/>
</dbReference>
<dbReference type="SUPFAM" id="SSF55031">
    <property type="entry name" value="Bacterial exopeptidase dimerisation domain"/>
    <property type="match status" value="1"/>
</dbReference>
<dbReference type="SUPFAM" id="SSF53187">
    <property type="entry name" value="Zn-dependent exopeptidases"/>
    <property type="match status" value="1"/>
</dbReference>
<dbReference type="PROSITE" id="PS00758">
    <property type="entry name" value="ARGE_DAPE_CPG2_1"/>
    <property type="match status" value="1"/>
</dbReference>
<dbReference type="PROSITE" id="PS00759">
    <property type="entry name" value="ARGE_DAPE_CPG2_2"/>
    <property type="match status" value="1"/>
</dbReference>
<evidence type="ECO:0000255" key="1">
    <source>
        <dbReference type="HAMAP-Rule" id="MF_00550"/>
    </source>
</evidence>
<keyword id="KW-0031">Aminopeptidase</keyword>
<keyword id="KW-0963">Cytoplasm</keyword>
<keyword id="KW-0378">Hydrolase</keyword>
<keyword id="KW-0479">Metal-binding</keyword>
<keyword id="KW-0482">Metalloprotease</keyword>
<keyword id="KW-0645">Protease</keyword>
<keyword id="KW-1185">Reference proteome</keyword>
<keyword id="KW-0862">Zinc</keyword>
<name>PEPT_STRR6</name>
<feature type="chain" id="PRO_0000185321" description="Peptidase T">
    <location>
        <begin position="1"/>
        <end position="406"/>
    </location>
</feature>
<feature type="active site" evidence="1">
    <location>
        <position position="83"/>
    </location>
</feature>
<feature type="active site" description="Proton acceptor" evidence="1">
    <location>
        <position position="176"/>
    </location>
</feature>
<feature type="binding site" evidence="1">
    <location>
        <position position="81"/>
    </location>
    <ligand>
        <name>Zn(2+)</name>
        <dbReference type="ChEBI" id="CHEBI:29105"/>
        <label>1</label>
    </ligand>
</feature>
<feature type="binding site" evidence="1">
    <location>
        <position position="142"/>
    </location>
    <ligand>
        <name>Zn(2+)</name>
        <dbReference type="ChEBI" id="CHEBI:29105"/>
        <label>1</label>
    </ligand>
</feature>
<feature type="binding site" evidence="1">
    <location>
        <position position="142"/>
    </location>
    <ligand>
        <name>Zn(2+)</name>
        <dbReference type="ChEBI" id="CHEBI:29105"/>
        <label>2</label>
    </ligand>
</feature>
<feature type="binding site" evidence="1">
    <location>
        <position position="177"/>
    </location>
    <ligand>
        <name>Zn(2+)</name>
        <dbReference type="ChEBI" id="CHEBI:29105"/>
        <label>2</label>
    </ligand>
</feature>
<feature type="binding site" evidence="1">
    <location>
        <position position="199"/>
    </location>
    <ligand>
        <name>Zn(2+)</name>
        <dbReference type="ChEBI" id="CHEBI:29105"/>
        <label>1</label>
    </ligand>
</feature>
<feature type="binding site" evidence="1">
    <location>
        <position position="381"/>
    </location>
    <ligand>
        <name>Zn(2+)</name>
        <dbReference type="ChEBI" id="CHEBI:29105"/>
        <label>2</label>
    </ligand>
</feature>
<gene>
    <name evidence="1" type="primary">pepT</name>
    <name type="ordered locus">spr0913</name>
</gene>